<comment type="function">
    <text evidence="1">Bifunctional serine/threonine kinase and phosphorylase involved in the regulation of the pyruvate, phosphate dikinase (PPDK) by catalyzing its phosphorylation/dephosphorylation.</text>
</comment>
<comment type="catalytic activity">
    <reaction evidence="1">
        <text>N(tele)-phospho-L-histidyl/L-threonyl-[pyruvate, phosphate dikinase] + ADP = N(tele)-phospho-L-histidyl/O-phospho-L-threonyl-[pyruvate, phosphate dikinase] + AMP + H(+)</text>
        <dbReference type="Rhea" id="RHEA:43692"/>
        <dbReference type="Rhea" id="RHEA-COMP:10650"/>
        <dbReference type="Rhea" id="RHEA-COMP:10651"/>
        <dbReference type="ChEBI" id="CHEBI:15378"/>
        <dbReference type="ChEBI" id="CHEBI:30013"/>
        <dbReference type="ChEBI" id="CHEBI:61977"/>
        <dbReference type="ChEBI" id="CHEBI:83586"/>
        <dbReference type="ChEBI" id="CHEBI:456215"/>
        <dbReference type="ChEBI" id="CHEBI:456216"/>
        <dbReference type="EC" id="2.7.11.32"/>
    </reaction>
</comment>
<comment type="catalytic activity">
    <reaction evidence="1">
        <text>N(tele)-phospho-L-histidyl/O-phospho-L-threonyl-[pyruvate, phosphate dikinase] + phosphate + H(+) = N(tele)-phospho-L-histidyl/L-threonyl-[pyruvate, phosphate dikinase] + diphosphate</text>
        <dbReference type="Rhea" id="RHEA:43696"/>
        <dbReference type="Rhea" id="RHEA-COMP:10650"/>
        <dbReference type="Rhea" id="RHEA-COMP:10651"/>
        <dbReference type="ChEBI" id="CHEBI:15378"/>
        <dbReference type="ChEBI" id="CHEBI:30013"/>
        <dbReference type="ChEBI" id="CHEBI:33019"/>
        <dbReference type="ChEBI" id="CHEBI:43474"/>
        <dbReference type="ChEBI" id="CHEBI:61977"/>
        <dbReference type="ChEBI" id="CHEBI:83586"/>
        <dbReference type="EC" id="2.7.4.27"/>
    </reaction>
</comment>
<comment type="similarity">
    <text evidence="1">Belongs to the pyruvate, phosphate/water dikinase regulatory protein family. PDRP subfamily.</text>
</comment>
<feature type="chain" id="PRO_1000136477" description="Putative pyruvate, phosphate dikinase regulatory protein">
    <location>
        <begin position="1"/>
        <end position="269"/>
    </location>
</feature>
<feature type="binding site" evidence="1">
    <location>
        <begin position="147"/>
        <end position="154"/>
    </location>
    <ligand>
        <name>ADP</name>
        <dbReference type="ChEBI" id="CHEBI:456216"/>
    </ligand>
</feature>
<evidence type="ECO:0000255" key="1">
    <source>
        <dbReference type="HAMAP-Rule" id="MF_00921"/>
    </source>
</evidence>
<gene>
    <name type="ordered locus">Glov_0997</name>
</gene>
<name>PDRP_TRIL1</name>
<sequence>MKKIYVLSDSTGETAERVVRAALSQFGGSDVRIVRLAKVCNQQEVQQAVATVTADEGLLVYTLVDSSLAVAVHTIAEEHGLMAFDLLSPLLHSLSVFLGTVAQSTPGLLHQIDTDYFRRMEAVNFTVKHDDGQENRGLVKADLVLVGVSRSSKTPLSMYLANKGYKVANVPLVKGIDPPEELEAIDPSKVVGLLISPKRLVEIRTSRLVNMGQSMKNSYADYEKVEDEIAFCRQYYRRHPGWLIIDVTCKSVEESASEILRRLVGQFAE</sequence>
<accession>B3E5Z6</accession>
<reference key="1">
    <citation type="submission" date="2008-05" db="EMBL/GenBank/DDBJ databases">
        <title>Complete sequence of chromosome of Geobacter lovleyi SZ.</title>
        <authorList>
            <consortium name="US DOE Joint Genome Institute"/>
            <person name="Lucas S."/>
            <person name="Copeland A."/>
            <person name="Lapidus A."/>
            <person name="Glavina del Rio T."/>
            <person name="Dalin E."/>
            <person name="Tice H."/>
            <person name="Bruce D."/>
            <person name="Goodwin L."/>
            <person name="Pitluck S."/>
            <person name="Chertkov O."/>
            <person name="Meincke L."/>
            <person name="Brettin T."/>
            <person name="Detter J.C."/>
            <person name="Han C."/>
            <person name="Tapia R."/>
            <person name="Kuske C.R."/>
            <person name="Schmutz J."/>
            <person name="Larimer F."/>
            <person name="Land M."/>
            <person name="Hauser L."/>
            <person name="Kyrpides N."/>
            <person name="Mikhailova N."/>
            <person name="Sung Y."/>
            <person name="Fletcher K.E."/>
            <person name="Ritalahti K.M."/>
            <person name="Loeffler F.E."/>
            <person name="Richardson P."/>
        </authorList>
    </citation>
    <scope>NUCLEOTIDE SEQUENCE [LARGE SCALE GENOMIC DNA]</scope>
    <source>
        <strain>ATCC BAA-1151 / DSM 17278 / SZ</strain>
    </source>
</reference>
<organism>
    <name type="scientific">Trichlorobacter lovleyi (strain ATCC BAA-1151 / DSM 17278 / SZ)</name>
    <name type="common">Geobacter lovleyi</name>
    <dbReference type="NCBI Taxonomy" id="398767"/>
    <lineage>
        <taxon>Bacteria</taxon>
        <taxon>Pseudomonadati</taxon>
        <taxon>Thermodesulfobacteriota</taxon>
        <taxon>Desulfuromonadia</taxon>
        <taxon>Geobacterales</taxon>
        <taxon>Geobacteraceae</taxon>
        <taxon>Trichlorobacter</taxon>
    </lineage>
</organism>
<dbReference type="EC" id="2.7.11.32" evidence="1"/>
<dbReference type="EC" id="2.7.4.27" evidence="1"/>
<dbReference type="EMBL" id="CP001089">
    <property type="protein sequence ID" value="ACD94720.1"/>
    <property type="molecule type" value="Genomic_DNA"/>
</dbReference>
<dbReference type="RefSeq" id="WP_012469070.1">
    <property type="nucleotide sequence ID" value="NC_010814.1"/>
</dbReference>
<dbReference type="SMR" id="B3E5Z6"/>
<dbReference type="STRING" id="398767.Glov_0997"/>
<dbReference type="KEGG" id="glo:Glov_0997"/>
<dbReference type="eggNOG" id="COG1806">
    <property type="taxonomic scope" value="Bacteria"/>
</dbReference>
<dbReference type="HOGENOM" id="CLU_046206_2_1_7"/>
<dbReference type="OrthoDB" id="9782201at2"/>
<dbReference type="Proteomes" id="UP000002420">
    <property type="component" value="Chromosome"/>
</dbReference>
<dbReference type="GO" id="GO:0043531">
    <property type="term" value="F:ADP binding"/>
    <property type="evidence" value="ECO:0007669"/>
    <property type="project" value="UniProtKB-UniRule"/>
</dbReference>
<dbReference type="GO" id="GO:0005524">
    <property type="term" value="F:ATP binding"/>
    <property type="evidence" value="ECO:0007669"/>
    <property type="project" value="InterPro"/>
</dbReference>
<dbReference type="GO" id="GO:0016776">
    <property type="term" value="F:phosphotransferase activity, phosphate group as acceptor"/>
    <property type="evidence" value="ECO:0007669"/>
    <property type="project" value="UniProtKB-UniRule"/>
</dbReference>
<dbReference type="GO" id="GO:0004674">
    <property type="term" value="F:protein serine/threonine kinase activity"/>
    <property type="evidence" value="ECO:0007669"/>
    <property type="project" value="UniProtKB-UniRule"/>
</dbReference>
<dbReference type="HAMAP" id="MF_00921">
    <property type="entry name" value="PDRP"/>
    <property type="match status" value="1"/>
</dbReference>
<dbReference type="InterPro" id="IPR005177">
    <property type="entry name" value="Kinase-pyrophosphorylase"/>
</dbReference>
<dbReference type="InterPro" id="IPR026565">
    <property type="entry name" value="PPDK_reg"/>
</dbReference>
<dbReference type="NCBIfam" id="NF003742">
    <property type="entry name" value="PRK05339.1"/>
    <property type="match status" value="1"/>
</dbReference>
<dbReference type="PANTHER" id="PTHR31756">
    <property type="entry name" value="PYRUVATE, PHOSPHATE DIKINASE REGULATORY PROTEIN 1, CHLOROPLASTIC"/>
    <property type="match status" value="1"/>
</dbReference>
<dbReference type="PANTHER" id="PTHR31756:SF3">
    <property type="entry name" value="PYRUVATE, PHOSPHATE DIKINASE REGULATORY PROTEIN 1, CHLOROPLASTIC"/>
    <property type="match status" value="1"/>
</dbReference>
<dbReference type="Pfam" id="PF03618">
    <property type="entry name" value="Kinase-PPPase"/>
    <property type="match status" value="1"/>
</dbReference>
<keyword id="KW-0418">Kinase</keyword>
<keyword id="KW-0547">Nucleotide-binding</keyword>
<keyword id="KW-1185">Reference proteome</keyword>
<keyword id="KW-0723">Serine/threonine-protein kinase</keyword>
<keyword id="KW-0808">Transferase</keyword>
<protein>
    <recommendedName>
        <fullName evidence="1">Putative pyruvate, phosphate dikinase regulatory protein</fullName>
        <shortName evidence="1">PPDK regulatory protein</shortName>
        <ecNumber evidence="1">2.7.11.32</ecNumber>
        <ecNumber evidence="1">2.7.4.27</ecNumber>
    </recommendedName>
</protein>
<proteinExistence type="inferred from homology"/>